<evidence type="ECO:0000250" key="1">
    <source>
        <dbReference type="UniProtKB" id="P0AD65"/>
    </source>
</evidence>
<evidence type="ECO:0000255" key="2"/>
<evidence type="ECO:0000256" key="3">
    <source>
        <dbReference type="SAM" id="MobiDB-lite"/>
    </source>
</evidence>
<evidence type="ECO:0000269" key="4">
    <source>
    </source>
</evidence>
<evidence type="ECO:0000269" key="5">
    <source>
    </source>
</evidence>
<evidence type="ECO:0000269" key="6">
    <source>
    </source>
</evidence>
<evidence type="ECO:0000269" key="7">
    <source>
    </source>
</evidence>
<evidence type="ECO:0000303" key="8">
    <source>
    </source>
</evidence>
<evidence type="ECO:0000303" key="9">
    <source>
    </source>
</evidence>
<evidence type="ECO:0000305" key="10"/>
<gene>
    <name evidence="9" type="primary">pbpA</name>
    <name type="synonym">yqgF</name>
    <name type="ordered locus">BSU25000</name>
</gene>
<dbReference type="EC" id="3.4.16.4" evidence="10"/>
<dbReference type="EMBL" id="D84432">
    <property type="protein sequence ID" value="BAA12509.1"/>
    <property type="molecule type" value="Genomic_DNA"/>
</dbReference>
<dbReference type="EMBL" id="AL009126">
    <property type="protein sequence ID" value="CAB14430.1"/>
    <property type="molecule type" value="Genomic_DNA"/>
</dbReference>
<dbReference type="PIR" id="E69672">
    <property type="entry name" value="E69672"/>
</dbReference>
<dbReference type="RefSeq" id="NP_390379.1">
    <property type="nucleotide sequence ID" value="NC_000964.3"/>
</dbReference>
<dbReference type="RefSeq" id="WP_004398702.1">
    <property type="nucleotide sequence ID" value="NZ_OZ025638.1"/>
</dbReference>
<dbReference type="SMR" id="P54488"/>
<dbReference type="FunCoup" id="P54488">
    <property type="interactions" value="41"/>
</dbReference>
<dbReference type="STRING" id="224308.BSU25000"/>
<dbReference type="MEROPS" id="X52.001"/>
<dbReference type="PaxDb" id="224308-BSU25000"/>
<dbReference type="EnsemblBacteria" id="CAB14430">
    <property type="protein sequence ID" value="CAB14430"/>
    <property type="gene ID" value="BSU_25000"/>
</dbReference>
<dbReference type="GeneID" id="938199"/>
<dbReference type="KEGG" id="bsu:BSU25000"/>
<dbReference type="PATRIC" id="fig|224308.179.peg.2719"/>
<dbReference type="eggNOG" id="COG0768">
    <property type="taxonomic scope" value="Bacteria"/>
</dbReference>
<dbReference type="InParanoid" id="P54488"/>
<dbReference type="OrthoDB" id="9770103at2"/>
<dbReference type="PhylomeDB" id="P54488"/>
<dbReference type="BioCyc" id="BSUB:BSU25000-MONOMER"/>
<dbReference type="UniPathway" id="UPA00219"/>
<dbReference type="Proteomes" id="UP000001570">
    <property type="component" value="Chromosome"/>
</dbReference>
<dbReference type="GO" id="GO:0005886">
    <property type="term" value="C:plasma membrane"/>
    <property type="evidence" value="ECO:0000318"/>
    <property type="project" value="GO_Central"/>
</dbReference>
<dbReference type="GO" id="GO:0008658">
    <property type="term" value="F:penicillin binding"/>
    <property type="evidence" value="ECO:0000318"/>
    <property type="project" value="GO_Central"/>
</dbReference>
<dbReference type="GO" id="GO:0071972">
    <property type="term" value="F:peptidoglycan L,D-transpeptidase activity"/>
    <property type="evidence" value="ECO:0000318"/>
    <property type="project" value="GO_Central"/>
</dbReference>
<dbReference type="GO" id="GO:0009002">
    <property type="term" value="F:serine-type D-Ala-D-Ala carboxypeptidase activity"/>
    <property type="evidence" value="ECO:0007669"/>
    <property type="project" value="UniProtKB-EC"/>
</dbReference>
<dbReference type="GO" id="GO:0071555">
    <property type="term" value="P:cell wall organization"/>
    <property type="evidence" value="ECO:0000318"/>
    <property type="project" value="GO_Central"/>
</dbReference>
<dbReference type="GO" id="GO:0009252">
    <property type="term" value="P:peptidoglycan biosynthetic process"/>
    <property type="evidence" value="ECO:0007669"/>
    <property type="project" value="UniProtKB-UniPathway"/>
</dbReference>
<dbReference type="GO" id="GO:0006508">
    <property type="term" value="P:proteolysis"/>
    <property type="evidence" value="ECO:0007669"/>
    <property type="project" value="UniProtKB-KW"/>
</dbReference>
<dbReference type="GO" id="GO:0008360">
    <property type="term" value="P:regulation of cell shape"/>
    <property type="evidence" value="ECO:0007669"/>
    <property type="project" value="UniProtKB-KW"/>
</dbReference>
<dbReference type="GO" id="GO:0046677">
    <property type="term" value="P:response to antibiotic"/>
    <property type="evidence" value="ECO:0007669"/>
    <property type="project" value="UniProtKB-KW"/>
</dbReference>
<dbReference type="FunFam" id="3.40.710.10:FF:000027">
    <property type="entry name" value="Penicillin-binding protein 2"/>
    <property type="match status" value="1"/>
</dbReference>
<dbReference type="FunFam" id="1.10.10.1230:FF:000001">
    <property type="entry name" value="Penicillin-binding protein 3"/>
    <property type="match status" value="1"/>
</dbReference>
<dbReference type="Gene3D" id="3.40.710.10">
    <property type="entry name" value="DD-peptidase/beta-lactamase superfamily"/>
    <property type="match status" value="1"/>
</dbReference>
<dbReference type="Gene3D" id="3.90.1310.10">
    <property type="entry name" value="Penicillin-binding protein 2a (Domain 2)"/>
    <property type="match status" value="1"/>
</dbReference>
<dbReference type="Gene3D" id="1.10.10.1230">
    <property type="entry name" value="Penicillin-binding protein, N-terminal non-catalytic domain, head sub-domain"/>
    <property type="match status" value="1"/>
</dbReference>
<dbReference type="InterPro" id="IPR050515">
    <property type="entry name" value="Bact_Transpept/Beta-Lactamase"/>
</dbReference>
<dbReference type="InterPro" id="IPR012338">
    <property type="entry name" value="Beta-lactam/transpept-like"/>
</dbReference>
<dbReference type="InterPro" id="IPR005311">
    <property type="entry name" value="PBP_dimer"/>
</dbReference>
<dbReference type="InterPro" id="IPR036138">
    <property type="entry name" value="PBP_dimer_sf"/>
</dbReference>
<dbReference type="InterPro" id="IPR001460">
    <property type="entry name" value="PCN-bd_Tpept"/>
</dbReference>
<dbReference type="PANTHER" id="PTHR30627">
    <property type="entry name" value="PEPTIDOGLYCAN D,D-TRANSPEPTIDASE"/>
    <property type="match status" value="1"/>
</dbReference>
<dbReference type="PANTHER" id="PTHR30627:SF2">
    <property type="entry name" value="PEPTIDOGLYCAN D,D-TRANSPEPTIDASE MRDA"/>
    <property type="match status" value="1"/>
</dbReference>
<dbReference type="Pfam" id="PF03717">
    <property type="entry name" value="PBP_dimer"/>
    <property type="match status" value="1"/>
</dbReference>
<dbReference type="Pfam" id="PF00905">
    <property type="entry name" value="Transpeptidase"/>
    <property type="match status" value="1"/>
</dbReference>
<dbReference type="SUPFAM" id="SSF56601">
    <property type="entry name" value="beta-lactamase/transpeptidase-like"/>
    <property type="match status" value="1"/>
</dbReference>
<dbReference type="SUPFAM" id="SSF56519">
    <property type="entry name" value="Penicillin binding protein dimerisation domain"/>
    <property type="match status" value="1"/>
</dbReference>
<keyword id="KW-0046">Antibiotic resistance</keyword>
<keyword id="KW-0121">Carboxypeptidase</keyword>
<keyword id="KW-1003">Cell membrane</keyword>
<keyword id="KW-0133">Cell shape</keyword>
<keyword id="KW-0961">Cell wall biogenesis/degradation</keyword>
<keyword id="KW-0903">Direct protein sequencing</keyword>
<keyword id="KW-0378">Hydrolase</keyword>
<keyword id="KW-0472">Membrane</keyword>
<keyword id="KW-0573">Peptidoglycan synthesis</keyword>
<keyword id="KW-0645">Protease</keyword>
<keyword id="KW-1185">Reference proteome</keyword>
<keyword id="KW-0812">Transmembrane</keyword>
<keyword id="KW-1133">Transmembrane helix</keyword>
<organism>
    <name type="scientific">Bacillus subtilis (strain 168)</name>
    <dbReference type="NCBI Taxonomy" id="224308"/>
    <lineage>
        <taxon>Bacteria</taxon>
        <taxon>Bacillati</taxon>
        <taxon>Bacillota</taxon>
        <taxon>Bacilli</taxon>
        <taxon>Bacillales</taxon>
        <taxon>Bacillaceae</taxon>
        <taxon>Bacillus</taxon>
    </lineage>
</organism>
<comment type="function">
    <text evidence="4 6 7">Involved in the synthesis of peptidoglycan associated with cell wall elongation, especially following spore germination (PubMed:9139922). Has a partially redundant function with PBP 1 (ponA) or PBP 4 (pbpD) during spore outgrowth (PubMed:9851991). Plays a redundant role with PbpH in determining the rod shape of the cell during vegetative growth and spore outgrowth (PubMed:12896990).</text>
</comment>
<comment type="catalytic activity">
    <reaction evidence="10">
        <text>Preferential cleavage: (Ac)2-L-Lys-D-Ala-|-D-Ala. Also transpeptidation of peptidyl-alanyl moieties that are N-acyl substituents of D-alanine.</text>
        <dbReference type="EC" id="3.4.16.4"/>
    </reaction>
</comment>
<comment type="pathway">
    <text>Cell wall biogenesis; peptidoglycan biosynthesis.</text>
</comment>
<comment type="subcellular location">
    <subcellularLocation>
        <location evidence="5">Cell membrane</location>
    </subcellularLocation>
    <subcellularLocation>
        <location evidence="5">Forespore inner membrane</location>
        <topology evidence="10">Single-pass membrane protein</topology>
    </subcellularLocation>
</comment>
<comment type="developmental stage">
    <text evidence="5">Expressed in vegetative cells. Also present in dormant spores in the forespore inner membrane.</text>
</comment>
<comment type="induction">
    <text evidence="6">Transcribed during vegetative phase, drops off during sporulation, rises again 30-40 minutes after germination. A small amount is present in dormant spores.</text>
</comment>
<comment type="disruption phenotype">
    <text evidence="4 6 7">No visible phenotype during vegetative growth rate in rich media, no difference in sporulation or initial spore germination. Spores have a significant delay in outgrowth, between 60-90 minutes cells swell rather than elongate, upon eventual elongation they have a larger diameter and are often bent (PubMed:9139922, PubMed:9851991). Single deletions have reduced peptidoglycan (PG) synthesis and turnover rates. Double ponA-pbpA deletions spores have greatly decreased viability, PG synthesis and elongate poorly; increased levels of Mg(2+) increase spore viability. Double pbpA-pbpD deletions spores have greatly decreased spore outgrowth and peptidoglycan synthesis (PubMed:9851991). Single pbpA mutants are less resistant to ceftriaxone and mecillinam. Double pbpA-pbpH mutants cannot be made, suggesting the 2 proteins have redundant, essential roles in vegetative growth (PubMed:12896990).</text>
</comment>
<comment type="similarity">
    <text evidence="10">Belongs to the transpeptidase family.</text>
</comment>
<proteinExistence type="evidence at protein level"/>
<name>PBP2A_BACSU</name>
<accession>P54488</accession>
<feature type="chain" id="PRO_0000195473" description="Penicillin-binding protein 2A">
    <location>
        <begin position="1"/>
        <end position="716"/>
    </location>
</feature>
<feature type="transmembrane region" description="Helical" evidence="2">
    <location>
        <begin position="22"/>
        <end position="42"/>
    </location>
</feature>
<feature type="region of interest" description="Disordered" evidence="3">
    <location>
        <begin position="689"/>
        <end position="716"/>
    </location>
</feature>
<feature type="compositionally biased region" description="Basic and acidic residues" evidence="3">
    <location>
        <begin position="689"/>
        <end position="706"/>
    </location>
</feature>
<feature type="active site" description="Acyl-ester intermediate" evidence="1">
    <location>
        <position position="397"/>
    </location>
</feature>
<reference key="1">
    <citation type="journal article" date="1996" name="Microbiology">
        <title>Systematic sequencing of the 283 kb 210 degrees-232 degrees region of the Bacillus subtilis genome containing the skin element and many sporulation genes.</title>
        <authorList>
            <person name="Mizuno M."/>
            <person name="Masuda S."/>
            <person name="Takemaru K."/>
            <person name="Hosono S."/>
            <person name="Sato T."/>
            <person name="Takeuchi M."/>
            <person name="Kobayashi Y."/>
        </authorList>
    </citation>
    <scope>NUCLEOTIDE SEQUENCE [GENOMIC DNA]</scope>
    <source>
        <strain>168 / JH642</strain>
    </source>
</reference>
<reference key="2">
    <citation type="journal article" date="1997" name="Nature">
        <title>The complete genome sequence of the Gram-positive bacterium Bacillus subtilis.</title>
        <authorList>
            <person name="Kunst F."/>
            <person name="Ogasawara N."/>
            <person name="Moszer I."/>
            <person name="Albertini A.M."/>
            <person name="Alloni G."/>
            <person name="Azevedo V."/>
            <person name="Bertero M.G."/>
            <person name="Bessieres P."/>
            <person name="Bolotin A."/>
            <person name="Borchert S."/>
            <person name="Borriss R."/>
            <person name="Boursier L."/>
            <person name="Brans A."/>
            <person name="Braun M."/>
            <person name="Brignell S.C."/>
            <person name="Bron S."/>
            <person name="Brouillet S."/>
            <person name="Bruschi C.V."/>
            <person name="Caldwell B."/>
            <person name="Capuano V."/>
            <person name="Carter N.M."/>
            <person name="Choi S.-K."/>
            <person name="Codani J.-J."/>
            <person name="Connerton I.F."/>
            <person name="Cummings N.J."/>
            <person name="Daniel R.A."/>
            <person name="Denizot F."/>
            <person name="Devine K.M."/>
            <person name="Duesterhoeft A."/>
            <person name="Ehrlich S.D."/>
            <person name="Emmerson P.T."/>
            <person name="Entian K.-D."/>
            <person name="Errington J."/>
            <person name="Fabret C."/>
            <person name="Ferrari E."/>
            <person name="Foulger D."/>
            <person name="Fritz C."/>
            <person name="Fujita M."/>
            <person name="Fujita Y."/>
            <person name="Fuma S."/>
            <person name="Galizzi A."/>
            <person name="Galleron N."/>
            <person name="Ghim S.-Y."/>
            <person name="Glaser P."/>
            <person name="Goffeau A."/>
            <person name="Golightly E.J."/>
            <person name="Grandi G."/>
            <person name="Guiseppi G."/>
            <person name="Guy B.J."/>
            <person name="Haga K."/>
            <person name="Haiech J."/>
            <person name="Harwood C.R."/>
            <person name="Henaut A."/>
            <person name="Hilbert H."/>
            <person name="Holsappel S."/>
            <person name="Hosono S."/>
            <person name="Hullo M.-F."/>
            <person name="Itaya M."/>
            <person name="Jones L.-M."/>
            <person name="Joris B."/>
            <person name="Karamata D."/>
            <person name="Kasahara Y."/>
            <person name="Klaerr-Blanchard M."/>
            <person name="Klein C."/>
            <person name="Kobayashi Y."/>
            <person name="Koetter P."/>
            <person name="Koningstein G."/>
            <person name="Krogh S."/>
            <person name="Kumano M."/>
            <person name="Kurita K."/>
            <person name="Lapidus A."/>
            <person name="Lardinois S."/>
            <person name="Lauber J."/>
            <person name="Lazarevic V."/>
            <person name="Lee S.-M."/>
            <person name="Levine A."/>
            <person name="Liu H."/>
            <person name="Masuda S."/>
            <person name="Mauel C."/>
            <person name="Medigue C."/>
            <person name="Medina N."/>
            <person name="Mellado R.P."/>
            <person name="Mizuno M."/>
            <person name="Moestl D."/>
            <person name="Nakai S."/>
            <person name="Noback M."/>
            <person name="Noone D."/>
            <person name="O'Reilly M."/>
            <person name="Ogawa K."/>
            <person name="Ogiwara A."/>
            <person name="Oudega B."/>
            <person name="Park S.-H."/>
            <person name="Parro V."/>
            <person name="Pohl T.M."/>
            <person name="Portetelle D."/>
            <person name="Porwollik S."/>
            <person name="Prescott A.M."/>
            <person name="Presecan E."/>
            <person name="Pujic P."/>
            <person name="Purnelle B."/>
            <person name="Rapoport G."/>
            <person name="Rey M."/>
            <person name="Reynolds S."/>
            <person name="Rieger M."/>
            <person name="Rivolta C."/>
            <person name="Rocha E."/>
            <person name="Roche B."/>
            <person name="Rose M."/>
            <person name="Sadaie Y."/>
            <person name="Sato T."/>
            <person name="Scanlan E."/>
            <person name="Schleich S."/>
            <person name="Schroeter R."/>
            <person name="Scoffone F."/>
            <person name="Sekiguchi J."/>
            <person name="Sekowska A."/>
            <person name="Seror S.J."/>
            <person name="Serror P."/>
            <person name="Shin B.-S."/>
            <person name="Soldo B."/>
            <person name="Sorokin A."/>
            <person name="Tacconi E."/>
            <person name="Takagi T."/>
            <person name="Takahashi H."/>
            <person name="Takemaru K."/>
            <person name="Takeuchi M."/>
            <person name="Tamakoshi A."/>
            <person name="Tanaka T."/>
            <person name="Terpstra P."/>
            <person name="Tognoni A."/>
            <person name="Tosato V."/>
            <person name="Uchiyama S."/>
            <person name="Vandenbol M."/>
            <person name="Vannier F."/>
            <person name="Vassarotti A."/>
            <person name="Viari A."/>
            <person name="Wambutt R."/>
            <person name="Wedler E."/>
            <person name="Wedler H."/>
            <person name="Weitzenegger T."/>
            <person name="Winters P."/>
            <person name="Wipat A."/>
            <person name="Yamamoto H."/>
            <person name="Yamane K."/>
            <person name="Yasumoto K."/>
            <person name="Yata K."/>
            <person name="Yoshida K."/>
            <person name="Yoshikawa H.-F."/>
            <person name="Zumstein E."/>
            <person name="Yoshikawa H."/>
            <person name="Danchin A."/>
        </authorList>
    </citation>
    <scope>NUCLEOTIDE SEQUENCE [LARGE SCALE GENOMIC DNA]</scope>
    <source>
        <strain>168</strain>
    </source>
</reference>
<reference key="3">
    <citation type="journal article" date="1997" name="J. Bacteriol.">
        <title>Identification and characterization of pbpA encoding Bacillus subtilis penicillin-binding protein 2A.</title>
        <authorList>
            <person name="Murray T."/>
            <person name="Popham D.L."/>
            <person name="Setlow P."/>
        </authorList>
    </citation>
    <scope>PROTEIN SEQUENCE OF 241-264 AND 401-426</scope>
    <scope>IDENTIFICATION OF GENE</scope>
    <scope>FUNCTION</scope>
    <scope>INDUCTION</scope>
    <scope>DISRUPTION PHENOTYPE</scope>
    <source>
        <strain>168</strain>
    </source>
</reference>
<reference key="4">
    <citation type="journal article" date="1986" name="J. Bacteriol.">
        <title>Correlation of penicillin-binding protein composition with different functions of two membranes in Bacillus subtilis forespores.</title>
        <authorList>
            <person name="Buchanan C.E."/>
            <person name="Neyman S.L."/>
        </authorList>
    </citation>
    <scope>SUBCELLULAR LOCATION</scope>
    <scope>DEVELOPMENTAL STAGE</scope>
    <scope>PENICILLIN-BINDING</scope>
    <source>
        <strain>168</strain>
    </source>
</reference>
<reference key="5">
    <citation type="journal article" date="1998" name="J. Bacteriol.">
        <title>Analysis of outgrowth of Bacillus subtilis spores lacking penicillin-binding protein 2a.</title>
        <authorList>
            <person name="Murray T."/>
            <person name="Popham D.L."/>
            <person name="Pearson C.B."/>
            <person name="Hand A.R."/>
            <person name="Setlow P."/>
        </authorList>
    </citation>
    <scope>FUNCTION</scope>
    <scope>DISRUPTION PHENOTYPE</scope>
    <source>
        <strain>168 / PS832</strain>
    </source>
</reference>
<reference key="6">
    <citation type="journal article" date="2003" name="J. Bacteriol.">
        <title>Rod shape determination by the Bacillus subtilis class B penicillin-binding proteins encoded by pbpA and pbpH.</title>
        <authorList>
            <person name="Wei Y."/>
            <person name="Havasy T."/>
            <person name="McPherson D.C."/>
            <person name="Popham D.L."/>
        </authorList>
    </citation>
    <scope>FUNCTION</scope>
    <scope>DISRUPTION PHENOTYPE</scope>
    <source>
        <strain>168 / PS832</strain>
    </source>
</reference>
<protein>
    <recommendedName>
        <fullName evidence="8">Penicillin-binding protein 2A</fullName>
        <shortName>PBP-2B</shortName>
        <ecNumber evidence="10">3.4.16.4</ecNumber>
    </recommendedName>
</protein>
<sequence length="716" mass="80142">MRRNKPKKQNHKEKKKSLPIRLNILFLAAFVIFTWIIVELGIKQIVQGDDYKNQANKQEQSEVSSAVPRGKIYDRNFNAIVTNKALNAITYTRSKSTTQEQRLKIAKKLSDMIKVDTKKVTERDKKDYWILTRPKEAKKLISSKERQQVEDKKISDDDLYQLQLKRITDKQLNELTDKDMQILAIKRQMDSGYALTPQYIKNEDVSAKEMAVVSEHLDELPGVDVTSDWEREYPYKNLLRSVLGSVSSSNEGLPSNLLDHYLSLGYSRNDRVGKSYLEYQYESLLQGQKAKVENITDSKGNVTGTKTVSEGKAGKDLVLTIDIDLQKSVEKIIEKKLKAAKARPSTELLDRAFVVMMDPRNGEVLTMAGKQIKRENGAYKFDDYALGAMTSSYAMGSAVKGATVLTGLQTGAINLNTVFKDEPLYIGQDKRGKKSWQNLGPVGIQTALEKSSNVFMFKTAIAVGKGEYKPHQALPLDTSAFDTFRNYFSQFGLGVKTGIDLPNEMTGYKGTSRLSGFLLDFAIGQYDTYTPLELAQYVSTIANGGYRMKPQLVKEVRDSNAKKGIGAVVDSVQPEVLNKVDMKSSYIEEVQAGFRRVATKGTAAGQLASASYKPAAKTGTAQSFYDGPDKSKTGTDTYNTTLVAYAPADNPEIAISVVVPWTYIDYNQRYSITNEIGREVMDKYFELKSKQDKEGTQQKNKDKIEENAENTTSSDN</sequence>